<proteinExistence type="evidence at protein level"/>
<name>MGST2_HUMAN</name>
<reference key="1">
    <citation type="journal article" date="1996" name="J. Biol. Chem.">
        <title>Identification and characterization of a novel human microsomal glutathione S-transferase with leukotriene C4 synthase activity and significant sequence identity to 5-lipoxygenase-activating protein and leukotriene C4 synthase.</title>
        <authorList>
            <person name="Jakobsson P.-J."/>
            <person name="Mancini J.A."/>
            <person name="Ford-Hutchinson A.W."/>
        </authorList>
    </citation>
    <scope>NUCLEOTIDE SEQUENCE [MRNA] (ISOFORM 1)</scope>
    <scope>CATALYTIC ACTIVITY</scope>
    <scope>TISSUE SPECIFICITY</scope>
    <scope>FUNCTION</scope>
    <scope>SUBCELLULAR LOCATION</scope>
</reference>
<reference key="2">
    <citation type="journal article" date="1997" name="J. Biol. Chem.">
        <title>Identification and characterization of a novel microsomal enzyme with glutathione-dependent transferase and peroxidase activities.</title>
        <authorList>
            <person name="Jakobsson P.-J."/>
            <person name="Mancini J.A."/>
            <person name="Riendeau D."/>
            <person name="Ford-Hutchinson A.W."/>
        </authorList>
    </citation>
    <scope>CATALYTIC ACTIVITY</scope>
    <scope>FUNCTION</scope>
    <scope>BIOPHYSICOCHEMICAL PROPERTIES</scope>
</reference>
<reference key="3">
    <citation type="submission" date="2004-05" db="EMBL/GenBank/DDBJ databases">
        <title>Cloning of human full open reading frames in Gateway(TM) system entry vector (pDONR201).</title>
        <authorList>
            <person name="Ebert L."/>
            <person name="Schick M."/>
            <person name="Neubert P."/>
            <person name="Schatten R."/>
            <person name="Henze S."/>
            <person name="Korn B."/>
        </authorList>
    </citation>
    <scope>NUCLEOTIDE SEQUENCE [LARGE SCALE MRNA] (ISOFORM 1)</scope>
</reference>
<reference key="4">
    <citation type="submission" date="2003-07" db="EMBL/GenBank/DDBJ databases">
        <authorList>
            <consortium name="NIEHS SNPs program"/>
        </authorList>
    </citation>
    <scope>NUCLEOTIDE SEQUENCE [GENOMIC DNA]</scope>
    <scope>VARIANT VAL-101</scope>
</reference>
<reference key="5">
    <citation type="journal article" date="2005" name="Nature">
        <title>Generation and annotation of the DNA sequences of human chromosomes 2 and 4.</title>
        <authorList>
            <person name="Hillier L.W."/>
            <person name="Graves T.A."/>
            <person name="Fulton R.S."/>
            <person name="Fulton L.A."/>
            <person name="Pepin K.H."/>
            <person name="Minx P."/>
            <person name="Wagner-McPherson C."/>
            <person name="Layman D."/>
            <person name="Wylie K."/>
            <person name="Sekhon M."/>
            <person name="Becker M.C."/>
            <person name="Fewell G.A."/>
            <person name="Delehaunty K.D."/>
            <person name="Miner T.L."/>
            <person name="Nash W.E."/>
            <person name="Kremitzki C."/>
            <person name="Oddy L."/>
            <person name="Du H."/>
            <person name="Sun H."/>
            <person name="Bradshaw-Cordum H."/>
            <person name="Ali J."/>
            <person name="Carter J."/>
            <person name="Cordes M."/>
            <person name="Harris A."/>
            <person name="Isak A."/>
            <person name="van Brunt A."/>
            <person name="Nguyen C."/>
            <person name="Du F."/>
            <person name="Courtney L."/>
            <person name="Kalicki J."/>
            <person name="Ozersky P."/>
            <person name="Abbott S."/>
            <person name="Armstrong J."/>
            <person name="Belter E.A."/>
            <person name="Caruso L."/>
            <person name="Cedroni M."/>
            <person name="Cotton M."/>
            <person name="Davidson T."/>
            <person name="Desai A."/>
            <person name="Elliott G."/>
            <person name="Erb T."/>
            <person name="Fronick C."/>
            <person name="Gaige T."/>
            <person name="Haakenson W."/>
            <person name="Haglund K."/>
            <person name="Holmes A."/>
            <person name="Harkins R."/>
            <person name="Kim K."/>
            <person name="Kruchowski S.S."/>
            <person name="Strong C.M."/>
            <person name="Grewal N."/>
            <person name="Goyea E."/>
            <person name="Hou S."/>
            <person name="Levy A."/>
            <person name="Martinka S."/>
            <person name="Mead K."/>
            <person name="McLellan M.D."/>
            <person name="Meyer R."/>
            <person name="Randall-Maher J."/>
            <person name="Tomlinson C."/>
            <person name="Dauphin-Kohlberg S."/>
            <person name="Kozlowicz-Reilly A."/>
            <person name="Shah N."/>
            <person name="Swearengen-Shahid S."/>
            <person name="Snider J."/>
            <person name="Strong J.T."/>
            <person name="Thompson J."/>
            <person name="Yoakum M."/>
            <person name="Leonard S."/>
            <person name="Pearman C."/>
            <person name="Trani L."/>
            <person name="Radionenko M."/>
            <person name="Waligorski J.E."/>
            <person name="Wang C."/>
            <person name="Rock S.M."/>
            <person name="Tin-Wollam A.-M."/>
            <person name="Maupin R."/>
            <person name="Latreille P."/>
            <person name="Wendl M.C."/>
            <person name="Yang S.-P."/>
            <person name="Pohl C."/>
            <person name="Wallis J.W."/>
            <person name="Spieth J."/>
            <person name="Bieri T.A."/>
            <person name="Berkowicz N."/>
            <person name="Nelson J.O."/>
            <person name="Osborne J."/>
            <person name="Ding L."/>
            <person name="Meyer R."/>
            <person name="Sabo A."/>
            <person name="Shotland Y."/>
            <person name="Sinha P."/>
            <person name="Wohldmann P.E."/>
            <person name="Cook L.L."/>
            <person name="Hickenbotham M.T."/>
            <person name="Eldred J."/>
            <person name="Williams D."/>
            <person name="Jones T.A."/>
            <person name="She X."/>
            <person name="Ciccarelli F.D."/>
            <person name="Izaurralde E."/>
            <person name="Taylor J."/>
            <person name="Schmutz J."/>
            <person name="Myers R.M."/>
            <person name="Cox D.R."/>
            <person name="Huang X."/>
            <person name="McPherson J.D."/>
            <person name="Mardis E.R."/>
            <person name="Clifton S.W."/>
            <person name="Warren W.C."/>
            <person name="Chinwalla A.T."/>
            <person name="Eddy S.R."/>
            <person name="Marra M.A."/>
            <person name="Ovcharenko I."/>
            <person name="Furey T.S."/>
            <person name="Miller W."/>
            <person name="Eichler E.E."/>
            <person name="Bork P."/>
            <person name="Suyama M."/>
            <person name="Torrents D."/>
            <person name="Waterston R.H."/>
            <person name="Wilson R.K."/>
        </authorList>
    </citation>
    <scope>NUCLEOTIDE SEQUENCE [LARGE SCALE GENOMIC DNA]</scope>
</reference>
<reference key="6">
    <citation type="journal article" date="2004" name="Genome Res.">
        <title>The status, quality, and expansion of the NIH full-length cDNA project: the Mammalian Gene Collection (MGC).</title>
        <authorList>
            <consortium name="The MGC Project Team"/>
        </authorList>
    </citation>
    <scope>NUCLEOTIDE SEQUENCE [LARGE SCALE MRNA] (ISOFORMS 1 AND 2)</scope>
    <source>
        <tissue>Lung</tissue>
        <tissue>Neuroblastoma</tissue>
    </source>
</reference>
<reference key="7">
    <citation type="journal article" date="2001" name="Eur. J. Biochem.">
        <title>Human umbilical vein endothelial cells generate leukotriene C4 via microsomal glutathione S-transferase type 2 and express the CysLT(1) receptor.</title>
        <authorList>
            <person name="Sjoestroem M."/>
            <person name="Jakobsson P.J."/>
            <person name="Heimburger M."/>
            <person name="Palmblad J."/>
            <person name="Haeggstroem J.Z."/>
        </authorList>
    </citation>
    <scope>CATALYTIC ACTIVITY</scope>
    <scope>FUNCTION</scope>
    <scope>TISSUE SPECIFICITY</scope>
    <scope>BIOPHYSICOCHEMICAL PROPERTIES</scope>
</reference>
<reference key="8">
    <citation type="journal article" date="2011" name="BMC Syst. Biol.">
        <title>Initial characterization of the human central proteome.</title>
        <authorList>
            <person name="Burkard T.R."/>
            <person name="Planyavsky M."/>
            <person name="Kaupe I."/>
            <person name="Breitwieser F.P."/>
            <person name="Buerckstuemmer T."/>
            <person name="Bennett K.L."/>
            <person name="Superti-Furga G."/>
            <person name="Colinge J."/>
        </authorList>
    </citation>
    <scope>IDENTIFICATION BY MASS SPECTROMETRY [LARGE SCALE ANALYSIS]</scope>
</reference>
<reference key="9">
    <citation type="journal article" date="2014" name="J. Proteomics">
        <title>An enzyme assisted RP-RPLC approach for in-depth analysis of human liver phosphoproteome.</title>
        <authorList>
            <person name="Bian Y."/>
            <person name="Song C."/>
            <person name="Cheng K."/>
            <person name="Dong M."/>
            <person name="Wang F."/>
            <person name="Huang J."/>
            <person name="Sun D."/>
            <person name="Wang L."/>
            <person name="Ye M."/>
            <person name="Zou H."/>
        </authorList>
    </citation>
    <scope>IDENTIFICATION BY MASS SPECTROMETRY [LARGE SCALE ANALYSIS]</scope>
    <source>
        <tissue>Liver</tissue>
    </source>
</reference>
<reference key="10">
    <citation type="journal article" date="2015" name="Proteomics">
        <title>N-terminome analysis of the human mitochondrial proteome.</title>
        <authorList>
            <person name="Vaca Jacome A.S."/>
            <person name="Rabilloud T."/>
            <person name="Schaeffer-Reiss C."/>
            <person name="Rompais M."/>
            <person name="Ayoub D."/>
            <person name="Lane L."/>
            <person name="Bairoch A."/>
            <person name="Van Dorsselaer A."/>
            <person name="Carapito C."/>
        </authorList>
    </citation>
    <scope>IDENTIFICATION BY MASS SPECTROMETRY [LARGE SCALE ANALYSIS]</scope>
</reference>
<reference key="11">
    <citation type="journal article" date="2013" name="Biochemistry">
        <title>Catalytic characterization of human microsomal glutathione S-transferase 2: identification of rate-limiting steps.</title>
        <authorList>
            <person name="Ahmad S."/>
            <person name="Niegowski D."/>
            <person name="Wetterholm A."/>
            <person name="Haeggstroem J.Z."/>
            <person name="Morgenstern R."/>
            <person name="Rinaldo-Matthis A."/>
        </authorList>
    </citation>
    <scope>CATALYTIC ACTIVITY</scope>
    <scope>BIOPHYSICOCHEMICAL PROPERTIES</scope>
    <scope>FUNCTION</scope>
    <scope>SUBSTRATE SPECIFICITY</scope>
    <scope>ACTIVITY REGULATION</scope>
</reference>
<reference key="12">
    <citation type="journal article" date="2015" name="Biochim. Biophys. Acta">
        <title>Trimeric microsomal glutathione transferase 2 displays one third of the sites reactivity.</title>
        <authorList>
            <person name="Ahmad S."/>
            <person name="Thulasingam M."/>
            <person name="Palombo I."/>
            <person name="Daley D.O."/>
            <person name="Johnson K.A."/>
            <person name="Morgenstern R."/>
            <person name="Haeggstroem J.Z."/>
            <person name="Rinaldo-Matthis A."/>
        </authorList>
    </citation>
    <scope>SUBUNIT</scope>
    <scope>ACTIVITY REGULATION</scope>
    <scope>CATALYTIC ACTIVITY</scope>
    <scope>FUNCTION</scope>
</reference>
<reference key="13">
    <citation type="journal article" date="2015" name="Nat. Commun.">
        <title>Leukotriene C4 is the major trigger of stress-induced oxidative DNA damage.</title>
        <authorList>
            <person name="Dvash E."/>
            <person name="Har-Tal M."/>
            <person name="Barak S."/>
            <person name="Meir O."/>
            <person name="Rubinstein M."/>
        </authorList>
    </citation>
    <scope>FUNCTION</scope>
    <scope>INDUCTION</scope>
</reference>
<dbReference type="EC" id="2.5.1.18" evidence="3 4 6"/>
<dbReference type="EC" id="1.11.1.-" evidence="3 7"/>
<dbReference type="EC" id="4.4.1.20" evidence="2 3 5 6"/>
<dbReference type="EMBL" id="U77604">
    <property type="protein sequence ID" value="AAC51768.1"/>
    <property type="molecule type" value="mRNA"/>
</dbReference>
<dbReference type="EMBL" id="CR407640">
    <property type="protein sequence ID" value="CAG28568.1"/>
    <property type="molecule type" value="mRNA"/>
</dbReference>
<dbReference type="EMBL" id="AY341028">
    <property type="protein sequence ID" value="AAP88934.1"/>
    <property type="status" value="ALT_SEQ"/>
    <property type="molecule type" value="Genomic_DNA"/>
</dbReference>
<dbReference type="EMBL" id="AC108053">
    <property type="status" value="NOT_ANNOTATED_CDS"/>
    <property type="molecule type" value="Genomic_DNA"/>
</dbReference>
<dbReference type="EMBL" id="AC112236">
    <property type="status" value="NOT_ANNOTATED_CDS"/>
    <property type="molecule type" value="Genomic_DNA"/>
</dbReference>
<dbReference type="EMBL" id="BC025416">
    <property type="protein sequence ID" value="AAH25416.1"/>
    <property type="molecule type" value="mRNA"/>
</dbReference>
<dbReference type="EMBL" id="BG519599">
    <property type="status" value="NOT_ANNOTATED_CDS"/>
    <property type="molecule type" value="mRNA"/>
</dbReference>
<dbReference type="CCDS" id="CCDS3749.1">
    <molecule id="Q99735-1"/>
</dbReference>
<dbReference type="CCDS" id="CCDS56339.1">
    <molecule id="Q99735-2"/>
</dbReference>
<dbReference type="RefSeq" id="NP_001191295.1">
    <molecule id="Q99735-1"/>
    <property type="nucleotide sequence ID" value="NM_001204366.2"/>
</dbReference>
<dbReference type="RefSeq" id="NP_001191297.1">
    <molecule id="Q99735-2"/>
    <property type="nucleotide sequence ID" value="NM_001204368.2"/>
</dbReference>
<dbReference type="RefSeq" id="NP_002404.1">
    <molecule id="Q99735-1"/>
    <property type="nucleotide sequence ID" value="NM_002413.5"/>
</dbReference>
<dbReference type="RefSeq" id="XP_016863700.1">
    <molecule id="Q99735-1"/>
    <property type="nucleotide sequence ID" value="XM_017008211.3"/>
</dbReference>
<dbReference type="RefSeq" id="XP_016863701.1">
    <molecule id="Q99735-1"/>
    <property type="nucleotide sequence ID" value="XM_017008212.3"/>
</dbReference>
<dbReference type="RefSeq" id="XP_016863702.1">
    <molecule id="Q99735-1"/>
    <property type="nucleotide sequence ID" value="XM_017008213.2"/>
</dbReference>
<dbReference type="RefSeq" id="XP_047271657.1">
    <molecule id="Q99735-1"/>
    <property type="nucleotide sequence ID" value="XM_047415701.1"/>
</dbReference>
<dbReference type="RefSeq" id="XP_054206024.1">
    <molecule id="Q99735-1"/>
    <property type="nucleotide sequence ID" value="XM_054350049.1"/>
</dbReference>
<dbReference type="RefSeq" id="XP_054206025.1">
    <molecule id="Q99735-1"/>
    <property type="nucleotide sequence ID" value="XM_054350050.1"/>
</dbReference>
<dbReference type="RefSeq" id="XP_054206026.1">
    <molecule id="Q99735-1"/>
    <property type="nucleotide sequence ID" value="XM_054350051.1"/>
</dbReference>
<dbReference type="PDB" id="6SSR">
    <property type="method" value="X-ray"/>
    <property type="resolution" value="3.80 A"/>
    <property type="chains" value="A/B/C=2-147"/>
</dbReference>
<dbReference type="PDB" id="6SSS">
    <property type="method" value="X-ray"/>
    <property type="resolution" value="2.50 A"/>
    <property type="chains" value="A/B/C/D/E/F=2-147"/>
</dbReference>
<dbReference type="PDB" id="6SSU">
    <property type="method" value="X-ray"/>
    <property type="resolution" value="2.50 A"/>
    <property type="chains" value="A/B/C=2-147"/>
</dbReference>
<dbReference type="PDB" id="6SSW">
    <property type="method" value="X-ray"/>
    <property type="resolution" value="3.00 A"/>
    <property type="chains" value="A/B/C=2-147"/>
</dbReference>
<dbReference type="PDBsum" id="6SSR"/>
<dbReference type="PDBsum" id="6SSS"/>
<dbReference type="PDBsum" id="6SSU"/>
<dbReference type="PDBsum" id="6SSW"/>
<dbReference type="SMR" id="Q99735"/>
<dbReference type="BioGRID" id="110414">
    <property type="interactions" value="35"/>
</dbReference>
<dbReference type="FunCoup" id="Q99735">
    <property type="interactions" value="491"/>
</dbReference>
<dbReference type="IntAct" id="Q99735">
    <property type="interactions" value="28"/>
</dbReference>
<dbReference type="MINT" id="Q99735"/>
<dbReference type="STRING" id="9606.ENSP00000482639"/>
<dbReference type="ChEMBL" id="CHEMBL1743185"/>
<dbReference type="DrugBank" id="DB01008">
    <property type="generic name" value="Busulfan"/>
</dbReference>
<dbReference type="DrugBank" id="DB00143">
    <property type="generic name" value="Glutathione"/>
</dbReference>
<dbReference type="DrugBank" id="DB14924">
    <property type="generic name" value="Ritlecitinib"/>
</dbReference>
<dbReference type="SwissLipids" id="SLP:000001464"/>
<dbReference type="iPTMnet" id="Q99735"/>
<dbReference type="PhosphoSitePlus" id="Q99735"/>
<dbReference type="SwissPalm" id="Q99735"/>
<dbReference type="BioMuta" id="MGST2"/>
<dbReference type="DMDM" id="2842764"/>
<dbReference type="jPOST" id="Q99735"/>
<dbReference type="MassIVE" id="Q99735"/>
<dbReference type="PaxDb" id="9606-ENSP00000482639"/>
<dbReference type="PeptideAtlas" id="Q99735"/>
<dbReference type="ProteomicsDB" id="13587"/>
<dbReference type="ProteomicsDB" id="78451">
    <molecule id="Q99735-1"/>
</dbReference>
<dbReference type="Pumba" id="Q99735"/>
<dbReference type="TopDownProteomics" id="Q99735-1">
    <molecule id="Q99735-1"/>
</dbReference>
<dbReference type="Antibodypedia" id="2759">
    <property type="antibodies" value="171 antibodies from 28 providers"/>
</dbReference>
<dbReference type="DNASU" id="4258"/>
<dbReference type="Ensembl" id="ENST00000265498.6">
    <molecule id="Q99735-1"/>
    <property type="protein sequence ID" value="ENSP00000265498.1"/>
    <property type="gene ID" value="ENSG00000085871.9"/>
</dbReference>
<dbReference type="Ensembl" id="ENST00000503816.1">
    <molecule id="Q99735-1"/>
    <property type="protein sequence ID" value="ENSP00000423008.1"/>
    <property type="gene ID" value="ENSG00000085871.9"/>
</dbReference>
<dbReference type="Ensembl" id="ENST00000506797.5">
    <molecule id="Q99735-2"/>
    <property type="protein sequence ID" value="ENSP00000424278.1"/>
    <property type="gene ID" value="ENSG00000085871.9"/>
</dbReference>
<dbReference type="Ensembl" id="ENST00000616265.4">
    <molecule id="Q99735-1"/>
    <property type="protein sequence ID" value="ENSP00000482639.1"/>
    <property type="gene ID" value="ENSG00000085871.9"/>
</dbReference>
<dbReference type="GeneID" id="4258"/>
<dbReference type="KEGG" id="hsa:4258"/>
<dbReference type="MANE-Select" id="ENST00000265498.6">
    <property type="protein sequence ID" value="ENSP00000265498.1"/>
    <property type="RefSeq nucleotide sequence ID" value="NM_002413.5"/>
    <property type="RefSeq protein sequence ID" value="NP_002404.1"/>
</dbReference>
<dbReference type="UCSC" id="uc003ihy.4">
    <molecule id="Q99735-1"/>
    <property type="organism name" value="human"/>
</dbReference>
<dbReference type="AGR" id="HGNC:7063"/>
<dbReference type="CTD" id="4258"/>
<dbReference type="DisGeNET" id="4258"/>
<dbReference type="GeneCards" id="MGST2"/>
<dbReference type="HGNC" id="HGNC:7063">
    <property type="gene designation" value="MGST2"/>
</dbReference>
<dbReference type="HPA" id="ENSG00000085871">
    <property type="expression patterns" value="Tissue enhanced (liver)"/>
</dbReference>
<dbReference type="MIM" id="601733">
    <property type="type" value="gene"/>
</dbReference>
<dbReference type="neXtProt" id="NX_Q99735"/>
<dbReference type="OpenTargets" id="ENSG00000085871"/>
<dbReference type="PharmGKB" id="PA30792"/>
<dbReference type="VEuPathDB" id="HostDB:ENSG00000085871"/>
<dbReference type="eggNOG" id="ENOG502S082">
    <property type="taxonomic scope" value="Eukaryota"/>
</dbReference>
<dbReference type="GeneTree" id="ENSGT00940000160288"/>
<dbReference type="HOGENOM" id="CLU_110291_3_0_1"/>
<dbReference type="InParanoid" id="Q99735"/>
<dbReference type="OMA" id="HKYFWGY"/>
<dbReference type="OrthoDB" id="410651at2759"/>
<dbReference type="PAN-GO" id="Q99735">
    <property type="GO annotations" value="6 GO annotations based on evolutionary models"/>
</dbReference>
<dbReference type="PhylomeDB" id="Q99735"/>
<dbReference type="TreeFam" id="TF105328"/>
<dbReference type="PathwayCommons" id="Q99735"/>
<dbReference type="Reactome" id="R-HSA-156590">
    <property type="pathway name" value="Glutathione conjugation"/>
</dbReference>
<dbReference type="Reactome" id="R-HSA-5423646">
    <property type="pathway name" value="Aflatoxin activation and detoxification"/>
</dbReference>
<dbReference type="SignaLink" id="Q99735"/>
<dbReference type="BioGRID-ORCS" id="4258">
    <property type="hits" value="7 hits in 1161 CRISPR screens"/>
</dbReference>
<dbReference type="ChiTaRS" id="MGST2">
    <property type="organism name" value="human"/>
</dbReference>
<dbReference type="GeneWiki" id="MGST2"/>
<dbReference type="GenomeRNAi" id="4258"/>
<dbReference type="Pharos" id="Q99735">
    <property type="development level" value="Tbio"/>
</dbReference>
<dbReference type="PRO" id="PR:Q99735"/>
<dbReference type="Proteomes" id="UP000005640">
    <property type="component" value="Chromosome 4"/>
</dbReference>
<dbReference type="RNAct" id="Q99735">
    <property type="molecule type" value="protein"/>
</dbReference>
<dbReference type="Bgee" id="ENSG00000085871">
    <property type="expression patterns" value="Expressed in mucosa of transverse colon and 202 other cell types or tissues"/>
</dbReference>
<dbReference type="GO" id="GO:0005783">
    <property type="term" value="C:endoplasmic reticulum"/>
    <property type="evidence" value="ECO:0000318"/>
    <property type="project" value="GO_Central"/>
</dbReference>
<dbReference type="GO" id="GO:0005789">
    <property type="term" value="C:endoplasmic reticulum membrane"/>
    <property type="evidence" value="ECO:0000304"/>
    <property type="project" value="Reactome"/>
</dbReference>
<dbReference type="GO" id="GO:0043231">
    <property type="term" value="C:intracellular membrane-bounded organelle"/>
    <property type="evidence" value="ECO:0000314"/>
    <property type="project" value="UniProtKB"/>
</dbReference>
<dbReference type="GO" id="GO:0016020">
    <property type="term" value="C:membrane"/>
    <property type="evidence" value="ECO:0000314"/>
    <property type="project" value="BHF-UCL"/>
</dbReference>
<dbReference type="GO" id="GO:0005635">
    <property type="term" value="C:nuclear envelope"/>
    <property type="evidence" value="ECO:0000318"/>
    <property type="project" value="GO_Central"/>
</dbReference>
<dbReference type="GO" id="GO:0005886">
    <property type="term" value="C:plasma membrane"/>
    <property type="evidence" value="ECO:0000314"/>
    <property type="project" value="UniProtKB"/>
</dbReference>
<dbReference type="GO" id="GO:0008047">
    <property type="term" value="F:enzyme activator activity"/>
    <property type="evidence" value="ECO:0007669"/>
    <property type="project" value="InterPro"/>
</dbReference>
<dbReference type="GO" id="GO:0043295">
    <property type="term" value="F:glutathione binding"/>
    <property type="evidence" value="ECO:0000314"/>
    <property type="project" value="UniProtKB"/>
</dbReference>
<dbReference type="GO" id="GO:0004602">
    <property type="term" value="F:glutathione peroxidase activity"/>
    <property type="evidence" value="ECO:0000314"/>
    <property type="project" value="BHF-UCL"/>
</dbReference>
<dbReference type="GO" id="GO:0004364">
    <property type="term" value="F:glutathione transferase activity"/>
    <property type="evidence" value="ECO:0000314"/>
    <property type="project" value="UniProtKB"/>
</dbReference>
<dbReference type="GO" id="GO:0042802">
    <property type="term" value="F:identical protein binding"/>
    <property type="evidence" value="ECO:0000314"/>
    <property type="project" value="UniProtKB"/>
</dbReference>
<dbReference type="GO" id="GO:0004464">
    <property type="term" value="F:leukotriene-C4 synthase activity"/>
    <property type="evidence" value="ECO:0000314"/>
    <property type="project" value="UniProtKB"/>
</dbReference>
<dbReference type="GO" id="GO:0006750">
    <property type="term" value="P:glutathione biosynthetic process"/>
    <property type="evidence" value="ECO:0000314"/>
    <property type="project" value="UniProtKB"/>
</dbReference>
<dbReference type="GO" id="GO:0019370">
    <property type="term" value="P:leukotriene biosynthetic process"/>
    <property type="evidence" value="ECO:0000314"/>
    <property type="project" value="UniProtKB"/>
</dbReference>
<dbReference type="GO" id="GO:0006629">
    <property type="term" value="P:lipid metabolic process"/>
    <property type="evidence" value="ECO:0000314"/>
    <property type="project" value="BHF-UCL"/>
</dbReference>
<dbReference type="GO" id="GO:0046466">
    <property type="term" value="P:membrane lipid catabolic process"/>
    <property type="evidence" value="ECO:0000314"/>
    <property type="project" value="BHF-UCL"/>
</dbReference>
<dbReference type="GO" id="GO:0050729">
    <property type="term" value="P:positive regulation of inflammatory response"/>
    <property type="evidence" value="ECO:0000303"/>
    <property type="project" value="BHF-UCL"/>
</dbReference>
<dbReference type="GO" id="GO:0032496">
    <property type="term" value="P:response to lipopolysaccharide"/>
    <property type="evidence" value="ECO:0007669"/>
    <property type="project" value="Ensembl"/>
</dbReference>
<dbReference type="FunFam" id="1.20.120.550:FF:000003">
    <property type="entry name" value="Leukotriene C4 synthase"/>
    <property type="match status" value="1"/>
</dbReference>
<dbReference type="Gene3D" id="1.20.120.550">
    <property type="entry name" value="Membrane associated eicosanoid/glutathione metabolism-like domain"/>
    <property type="match status" value="1"/>
</dbReference>
<dbReference type="InterPro" id="IPR001446">
    <property type="entry name" value="5_LipOase_AP"/>
</dbReference>
<dbReference type="InterPro" id="IPR018295">
    <property type="entry name" value="FLAP/GST2/LTC4S_CS"/>
</dbReference>
<dbReference type="InterPro" id="IPR050997">
    <property type="entry name" value="MAPEG"/>
</dbReference>
<dbReference type="InterPro" id="IPR023352">
    <property type="entry name" value="MAPEG-like_dom_sf"/>
</dbReference>
<dbReference type="InterPro" id="IPR001129">
    <property type="entry name" value="Membr-assoc_MAPEG"/>
</dbReference>
<dbReference type="PANTHER" id="PTHR10250">
    <property type="entry name" value="MICROSOMAL GLUTATHIONE S-TRANSFERASE"/>
    <property type="match status" value="1"/>
</dbReference>
<dbReference type="PANTHER" id="PTHR10250:SF13">
    <property type="entry name" value="MICROSOMAL GLUTATHIONE S-TRANSFERASE 2"/>
    <property type="match status" value="1"/>
</dbReference>
<dbReference type="Pfam" id="PF01124">
    <property type="entry name" value="MAPEG"/>
    <property type="match status" value="1"/>
</dbReference>
<dbReference type="PRINTS" id="PR00488">
    <property type="entry name" value="5LPOXGNASEAP"/>
</dbReference>
<dbReference type="SUPFAM" id="SSF161084">
    <property type="entry name" value="MAPEG domain-like"/>
    <property type="match status" value="1"/>
</dbReference>
<dbReference type="PROSITE" id="PS01297">
    <property type="entry name" value="FLAP_GST2_LTC4S"/>
    <property type="match status" value="1"/>
</dbReference>
<keyword id="KW-0002">3D-structure</keyword>
<keyword id="KW-0025">Alternative splicing</keyword>
<keyword id="KW-0256">Endoplasmic reticulum</keyword>
<keyword id="KW-0434">Leukotriene biosynthesis</keyword>
<keyword id="KW-0443">Lipid metabolism</keyword>
<keyword id="KW-0456">Lyase</keyword>
<keyword id="KW-0472">Membrane</keyword>
<keyword id="KW-0492">Microsome</keyword>
<keyword id="KW-0560">Oxidoreductase</keyword>
<keyword id="KW-1267">Proteomics identification</keyword>
<keyword id="KW-1185">Reference proteome</keyword>
<keyword id="KW-0808">Transferase</keyword>
<keyword id="KW-0812">Transmembrane</keyword>
<keyword id="KW-1133">Transmembrane helix</keyword>
<organism>
    <name type="scientific">Homo sapiens</name>
    <name type="common">Human</name>
    <dbReference type="NCBI Taxonomy" id="9606"/>
    <lineage>
        <taxon>Eukaryota</taxon>
        <taxon>Metazoa</taxon>
        <taxon>Chordata</taxon>
        <taxon>Craniata</taxon>
        <taxon>Vertebrata</taxon>
        <taxon>Euteleostomi</taxon>
        <taxon>Mammalia</taxon>
        <taxon>Eutheria</taxon>
        <taxon>Euarchontoglires</taxon>
        <taxon>Primates</taxon>
        <taxon>Haplorrhini</taxon>
        <taxon>Catarrhini</taxon>
        <taxon>Hominidae</taxon>
        <taxon>Homo</taxon>
    </lineage>
</organism>
<evidence type="ECO:0000255" key="1"/>
<evidence type="ECO:0000269" key="2">
    <source>
    </source>
</evidence>
<evidence type="ECO:0000269" key="3">
    <source>
    </source>
</evidence>
<evidence type="ECO:0000269" key="4">
    <source>
    </source>
</evidence>
<evidence type="ECO:0000269" key="5">
    <source>
    </source>
</evidence>
<evidence type="ECO:0000269" key="6">
    <source>
    </source>
</evidence>
<evidence type="ECO:0000269" key="7">
    <source>
    </source>
</evidence>
<evidence type="ECO:0000269" key="8">
    <source ref="4"/>
</evidence>
<evidence type="ECO:0000303" key="9">
    <source>
    </source>
</evidence>
<evidence type="ECO:0000303" key="10">
    <source>
    </source>
</evidence>
<evidence type="ECO:0000305" key="11"/>
<evidence type="ECO:0000305" key="12">
    <source>
    </source>
</evidence>
<evidence type="ECO:0000305" key="13">
    <source>
    </source>
</evidence>
<evidence type="ECO:0000305" key="14">
    <source>
    </source>
</evidence>
<evidence type="ECO:0007829" key="15">
    <source>
        <dbReference type="PDB" id="6SSS"/>
    </source>
</evidence>
<comment type="function">
    <text evidence="3 4 5 6 7">Catalyzes several different glutathione-dependent reactions (PubMed:23409838, PubMed:26066610, PubMed:26656251, PubMed:8703034, PubMed:9278457). Catalyzes the glutathione-dependent reduction of lipid hydroperoxides, such as 5-HPETE (PubMed:23409838, PubMed:9278457). Has glutathione transferase activity, toward xenobiotic electrophiles, such as 1-chloro-2, 4-dinitrobenzene (CDNB) (PubMed:23409838, PubMed:8703034). Also catalyzes the conjugation of leukotriene A4 with reduced glutathione to form leukotriene C4 (LTC4) (PubMed:23409838, PubMed:26656251). Involved in oxidative DNA damage induced by ER stress and anticancer agents by activating LTC4 biosynthetic machinery in nonimmune cells (PubMed:26656251).</text>
</comment>
<comment type="catalytic activity">
    <reaction evidence="3 4 6">
        <text>RX + glutathione = an S-substituted glutathione + a halide anion + H(+)</text>
        <dbReference type="Rhea" id="RHEA:16437"/>
        <dbReference type="ChEBI" id="CHEBI:15378"/>
        <dbReference type="ChEBI" id="CHEBI:16042"/>
        <dbReference type="ChEBI" id="CHEBI:17792"/>
        <dbReference type="ChEBI" id="CHEBI:57925"/>
        <dbReference type="ChEBI" id="CHEBI:90779"/>
        <dbReference type="EC" id="2.5.1.18"/>
    </reaction>
</comment>
<comment type="catalytic activity">
    <reaction evidence="3 6">
        <text>1-chloro-2,4-dinitrobenzene + glutathione = 2,4-dinitrophenyl-S-glutathione + chloride + H(+)</text>
        <dbReference type="Rhea" id="RHEA:51220"/>
        <dbReference type="ChEBI" id="CHEBI:15378"/>
        <dbReference type="ChEBI" id="CHEBI:17996"/>
        <dbReference type="ChEBI" id="CHEBI:34718"/>
        <dbReference type="ChEBI" id="CHEBI:57925"/>
        <dbReference type="ChEBI" id="CHEBI:133977"/>
        <dbReference type="EC" id="2.5.1.18"/>
    </reaction>
</comment>
<comment type="catalytic activity">
    <reaction evidence="2 3 5 6">
        <text>leukotriene C4 = leukotriene A4 + glutathione</text>
        <dbReference type="Rhea" id="RHEA:17617"/>
        <dbReference type="ChEBI" id="CHEBI:57463"/>
        <dbReference type="ChEBI" id="CHEBI:57925"/>
        <dbReference type="ChEBI" id="CHEBI:57973"/>
        <dbReference type="EC" id="4.4.1.20"/>
    </reaction>
    <physiologicalReaction direction="left-to-right" evidence="12 13">
        <dbReference type="Rhea" id="RHEA:17618"/>
    </physiologicalReaction>
</comment>
<comment type="catalytic activity">
    <reaction evidence="3 7">
        <text>(5S)-hydroperoxy-(6E,8Z,11Z,14Z)-eicosatetraenoate + 2 glutathione = (5S)-hydroxy-(6E,8Z,11Z,14Z)-eicosatetraenoate + glutathione disulfide + H2O</text>
        <dbReference type="Rhea" id="RHEA:48620"/>
        <dbReference type="ChEBI" id="CHEBI:15377"/>
        <dbReference type="ChEBI" id="CHEBI:57450"/>
        <dbReference type="ChEBI" id="CHEBI:57925"/>
        <dbReference type="ChEBI" id="CHEBI:58297"/>
        <dbReference type="ChEBI" id="CHEBI:90632"/>
    </reaction>
</comment>
<comment type="activity regulation">
    <text evidence="3 4">Each monomer can bind on GSH molecule but only one subunit is catalytically active.</text>
</comment>
<comment type="biophysicochemical properties">
    <kinetics>
        <KM evidence="3 7">7 uM for (5S)-hydroperoxy-(6E,8Z,11Z,14Z)-eicosatetraenoate (5-HPETE)</KM>
        <KM evidence="2">28 uM for leukotriene A4</KM>
        <KM evidence="3">40 uM for leukotriene A4</KM>
        <text evidence="3">kcat is 0.6 sec(-1) for leukotriene A4 as substrate (PubMed:23409838). kcat is 14.3 sec(-1) for 1-chloro-2,4-dinitrobenzene as substrate (PubMed:23409838). kcat is 0.1 sec(-1) for 5-HPETE as substrate (PubMed:23409838).</text>
    </kinetics>
</comment>
<comment type="subunit">
    <text evidence="4">Homotrimer.</text>
</comment>
<comment type="interaction">
    <interactant intactId="EBI-11324706">
        <id>Q99735</id>
    </interactant>
    <interactant intactId="EBI-79189">
        <id>P78348</id>
        <label>ASIC1</label>
    </interactant>
    <organismsDiffer>false</organismsDiffer>
    <experiments>3</experiments>
</comment>
<comment type="interaction">
    <interactant intactId="EBI-11324706">
        <id>Q99735</id>
    </interactant>
    <interactant intactId="EBI-2126349">
        <id>Q9HD36</id>
        <label>BCL2L10</label>
    </interactant>
    <organismsDiffer>false</organismsDiffer>
    <experiments>3</experiments>
</comment>
<comment type="interaction">
    <interactant intactId="EBI-11324706">
        <id>Q99735</id>
    </interactant>
    <interactant intactId="EBI-707714">
        <id>Q92843</id>
        <label>BCL2L2</label>
    </interactant>
    <organismsDiffer>false</organismsDiffer>
    <experiments>3</experiments>
</comment>
<comment type="interaction">
    <interactant intactId="EBI-11324706">
        <id>Q99735</id>
    </interactant>
    <interactant intactId="EBI-12934095">
        <id>P16619</id>
        <label>CCL3L3</label>
    </interactant>
    <organismsDiffer>false</organismsDiffer>
    <experiments>3</experiments>
</comment>
<comment type="interaction">
    <interactant intactId="EBI-11324706">
        <id>Q99735</id>
    </interactant>
    <interactant intactId="EBI-17710733">
        <id>Q86T13</id>
        <label>CLEC14A</label>
    </interactant>
    <organismsDiffer>false</organismsDiffer>
    <experiments>3</experiments>
</comment>
<comment type="interaction">
    <interactant intactId="EBI-11324706">
        <id>Q99735</id>
    </interactant>
    <interactant intactId="EBI-625022">
        <id>O43889-2</id>
        <label>CREB3</label>
    </interactant>
    <organismsDiffer>false</organismsDiffer>
    <experiments>3</experiments>
</comment>
<comment type="interaction">
    <interactant intactId="EBI-11324706">
        <id>Q99735</id>
    </interactant>
    <interactant intactId="EBI-6942903">
        <id>Q96BA8</id>
        <label>CREB3L1</label>
    </interactant>
    <organismsDiffer>false</organismsDiffer>
    <experiments>3</experiments>
</comment>
<comment type="interaction">
    <interactant intactId="EBI-11324706">
        <id>Q99735</id>
    </interactant>
    <interactant intactId="EBI-12019274">
        <id>Q4LDR2</id>
        <label>CTXN3</label>
    </interactant>
    <organismsDiffer>false</organismsDiffer>
    <experiments>5</experiments>
</comment>
<comment type="interaction">
    <interactant intactId="EBI-11324706">
        <id>Q99735</id>
    </interactant>
    <interactant intactId="EBI-8639143">
        <id>Q96LL9</id>
        <label>DNAJC30</label>
    </interactant>
    <organismsDiffer>false</organismsDiffer>
    <experiments>3</experiments>
</comment>
<comment type="interaction">
    <interactant intactId="EBI-11324706">
        <id>Q99735</id>
    </interactant>
    <interactant intactId="EBI-6166686">
        <id>Q96F15</id>
        <label>GIMAP5</label>
    </interactant>
    <organismsDiffer>false</organismsDiffer>
    <experiments>3</experiments>
</comment>
<comment type="interaction">
    <interactant intactId="EBI-11324706">
        <id>Q99735</id>
    </interactant>
    <interactant intactId="EBI-17458373">
        <id>P48165</id>
        <label>GJA8</label>
    </interactant>
    <organismsDiffer>false</organismsDiffer>
    <experiments>3</experiments>
</comment>
<comment type="interaction">
    <interactant intactId="EBI-11324706">
        <id>Q99735</id>
    </interactant>
    <interactant intactId="EBI-11721746">
        <id>Q8TED1</id>
        <label>GPX8</label>
    </interactant>
    <organismsDiffer>false</organismsDiffer>
    <experiments>3</experiments>
</comment>
<comment type="interaction">
    <interactant intactId="EBI-11324706">
        <id>Q99735</id>
    </interactant>
    <interactant intactId="EBI-11324706">
        <id>Q99735</id>
        <label>MGST2</label>
    </interactant>
    <organismsDiffer>false</organismsDiffer>
    <experiments>3</experiments>
</comment>
<comment type="interaction">
    <interactant intactId="EBI-11324706">
        <id>Q99735</id>
    </interactant>
    <interactant intactId="EBI-692836">
        <id>P26678</id>
        <label>PLN</label>
    </interactant>
    <organismsDiffer>false</organismsDiffer>
    <experiments>3</experiments>
</comment>
<comment type="interaction">
    <interactant intactId="EBI-11324706">
        <id>Q99735</id>
    </interactant>
    <interactant intactId="EBI-1045072">
        <id>Q96T60</id>
        <label>PNKP</label>
    </interactant>
    <organismsDiffer>false</organismsDiffer>
    <experiments>3</experiments>
</comment>
<comment type="interaction">
    <interactant intactId="EBI-11324706">
        <id>Q99735</id>
    </interactant>
    <interactant intactId="EBI-8652744">
        <id>Q96IW7</id>
        <label>SEC22A</label>
    </interactant>
    <organismsDiffer>false</organismsDiffer>
    <experiments>3</experiments>
</comment>
<comment type="interaction">
    <interactant intactId="EBI-11324706">
        <id>Q99735</id>
    </interactant>
    <interactant intactId="EBI-1058865">
        <id>O75396</id>
        <label>SEC22B</label>
    </interactant>
    <organismsDiffer>false</organismsDiffer>
    <experiments>3</experiments>
</comment>
<comment type="interaction">
    <interactant intactId="EBI-11324706">
        <id>Q99735</id>
    </interactant>
    <interactant intactId="EBI-5663627">
        <id>Q16585</id>
        <label>SGCB</label>
    </interactant>
    <organismsDiffer>false</organismsDiffer>
    <experiments>3</experiments>
</comment>
<comment type="interaction">
    <interactant intactId="EBI-11324706">
        <id>Q99735</id>
    </interactant>
    <interactant intactId="EBI-727240">
        <id>Q9UNK0</id>
        <label>STX8</label>
    </interactant>
    <organismsDiffer>false</organismsDiffer>
    <experiments>3</experiments>
</comment>
<comment type="interaction">
    <interactant intactId="EBI-11324706">
        <id>Q99735</id>
    </interactant>
    <interactant intactId="EBI-17684533">
        <id>Q9NRX6</id>
        <label>TMEM167B</label>
    </interactant>
    <organismsDiffer>false</organismsDiffer>
    <experiments>3</experiments>
</comment>
<comment type="interaction">
    <interactant intactId="EBI-11324706">
        <id>Q99735</id>
    </interactant>
    <interactant intactId="EBI-13301303">
        <id>Q6UWW9</id>
        <label>TMEM207</label>
    </interactant>
    <organismsDiffer>false</organismsDiffer>
    <experiments>3</experiments>
</comment>
<comment type="interaction">
    <interactant intactId="EBI-11324706">
        <id>Q99735</id>
    </interactant>
    <interactant intactId="EBI-10243654">
        <id>Q5BVD1</id>
        <label>TTMP</label>
    </interactant>
    <organismsDiffer>false</organismsDiffer>
    <experiments>3</experiments>
</comment>
<comment type="interaction">
    <interactant intactId="EBI-11324706">
        <id>Q99735</id>
    </interactant>
    <interactant intactId="EBI-722343">
        <id>Q15836</id>
        <label>VAMP3</label>
    </interactant>
    <organismsDiffer>false</organismsDiffer>
    <experiments>3</experiments>
</comment>
<comment type="subcellular location">
    <subcellularLocation>
        <location evidence="14">Endoplasmic reticulum membrane</location>
        <topology evidence="1">Multi-pass membrane protein</topology>
    </subcellularLocation>
    <subcellularLocation>
        <location evidence="6">Microsome membrane</location>
        <topology evidence="1">Multi-pass membrane protein</topology>
    </subcellularLocation>
</comment>
<comment type="alternative products">
    <event type="alternative splicing"/>
    <isoform>
        <id>Q99735-1</id>
        <name>1</name>
        <sequence type="displayed"/>
    </isoform>
    <isoform>
        <id>Q99735-2</id>
        <name>2</name>
        <sequence type="described" ref="VSP_044538"/>
    </isoform>
</comment>
<comment type="tissue specificity">
    <text evidence="2 6">Liver, spleen, skeletal muscle, heart, adrenals, pancreas, prostate, testis, fetal liver, and fetal spleen. Very low expression in lung, brain, placenta and bone marrow (PubMed:8703034). Abundantly expressed in human umbilical vein endothelial cells (at protein level) (PubMed:11322876).</text>
</comment>
<comment type="induction">
    <text evidence="5">Upon ER stress with brefeldin A or with tunicamycin, MGST2 is down-regulated, in several non-haematopoietic cell types, during the early, protective phase of the unfolded protein response (UPR), and up-regulated at the late, death-promoting phase of the unfolded protein response (UPR).</text>
</comment>
<comment type="similarity">
    <text evidence="11">Belongs to the MAPEG family.</text>
</comment>
<protein>
    <recommendedName>
        <fullName>Microsomal glutathione S-transferase 2</fullName>
        <shortName>Microsomal GST-2</shortName>
        <ecNumber evidence="3 4 6">2.5.1.18</ecNumber>
    </recommendedName>
    <alternativeName>
        <fullName evidence="11">Glutathione peroxidase MGST2</fullName>
        <ecNumber evidence="3 7">1.11.1.-</ecNumber>
    </alternativeName>
    <alternativeName>
        <fullName evidence="11">Leukotriene C4 synthase MGST2</fullName>
        <ecNumber evidence="2 3 5 6">4.4.1.20</ecNumber>
    </alternativeName>
    <alternativeName>
        <fullName evidence="10">Microsomal glutathione S-transferase II</fullName>
        <shortName evidence="10">Microsomal GST-II</shortName>
    </alternativeName>
</protein>
<gene>
    <name type="primary">MGST2</name>
    <name type="synonym">GST2</name>
</gene>
<feature type="chain" id="PRO_0000217740" description="Microsomal glutathione S-transferase 2">
    <location>
        <begin position="1"/>
        <end position="147"/>
    </location>
</feature>
<feature type="transmembrane region" description="Helical" evidence="1">
    <location>
        <begin position="6"/>
        <end position="26"/>
    </location>
</feature>
<feature type="transmembrane region" description="Helical" evidence="1">
    <location>
        <begin position="59"/>
        <end position="79"/>
    </location>
</feature>
<feature type="transmembrane region" description="Helical" evidence="1">
    <location>
        <begin position="111"/>
        <end position="131"/>
    </location>
</feature>
<feature type="splice variant" id="VSP_044538" description="In isoform 2." evidence="9">
    <original>QQNCVEFYPIFIITLWMAGWYFNQVFATCLGLVYIYGRHLYFWGYSEAAKKRITGFRLSLGILALLTLLGALGIANSFLDEYLDLNIAKKLRRQF</original>
    <variation>HFCYLSGSGVHIWPSPILLGIFRSC</variation>
    <location>
        <begin position="53"/>
        <end position="147"/>
    </location>
</feature>
<feature type="sequence variant" id="VAR_019997" description="In dbSNP:rs8192111." evidence="8">
    <original>A</original>
    <variation>V</variation>
    <location>
        <position position="101"/>
    </location>
</feature>
<feature type="helix" evidence="15">
    <location>
        <begin position="6"/>
        <end position="32"/>
    </location>
</feature>
<feature type="helix" evidence="15">
    <location>
        <begin position="44"/>
        <end position="73"/>
    </location>
</feature>
<feature type="helix" evidence="15">
    <location>
        <begin position="76"/>
        <end position="99"/>
    </location>
</feature>
<feature type="helix" evidence="15">
    <location>
        <begin position="101"/>
        <end position="104"/>
    </location>
</feature>
<feature type="helix" evidence="15">
    <location>
        <begin position="105"/>
        <end position="133"/>
    </location>
</feature>
<sequence>MAGNSILLAAVSILSACQQSYFALQVGKARLKYKVTPPAVTGSPEFERVFRAQQNCVEFYPIFIITLWMAGWYFNQVFATCLGLVYIYGRHLYFWGYSEAAKKRITGFRLSLGILALLTLLGALGIANSFLDEYLDLNIAKKLRRQF</sequence>
<accession>Q99735</accession>
<accession>D6RBB5</accession>
<accession>Q7Z5B8</accession>